<protein>
    <recommendedName>
        <fullName>Probable T4-type lysozyme 2</fullName>
        <ecNumber>3.2.1.17</ecNumber>
    </recommendedName>
    <alternativeName>
        <fullName>Muramidase</fullName>
    </alternativeName>
</protein>
<dbReference type="EC" id="3.2.1.17"/>
<dbReference type="EMBL" id="AAFI02000012">
    <property type="protein sequence ID" value="EAL70038.1"/>
    <property type="molecule type" value="Genomic_DNA"/>
</dbReference>
<dbReference type="EMBL" id="BJ358088">
    <property type="status" value="NOT_ANNOTATED_CDS"/>
    <property type="molecule type" value="mRNA"/>
</dbReference>
<dbReference type="RefSeq" id="XP_643994.1">
    <property type="nucleotide sequence ID" value="XM_638902.1"/>
</dbReference>
<dbReference type="SMR" id="Q86AA1"/>
<dbReference type="CAZy" id="GH24">
    <property type="family name" value="Glycoside Hydrolase Family 24"/>
</dbReference>
<dbReference type="PaxDb" id="44689-DDB0266463"/>
<dbReference type="EnsemblProtists" id="EAL70038">
    <property type="protein sequence ID" value="EAL70038"/>
    <property type="gene ID" value="DDB_G0274291"/>
</dbReference>
<dbReference type="GeneID" id="8619420"/>
<dbReference type="KEGG" id="ddi:DDB_G0274291"/>
<dbReference type="dictyBase" id="DDB_G0274291">
    <property type="gene designation" value="lyT2-4"/>
</dbReference>
<dbReference type="VEuPathDB" id="AmoebaDB:DDB_G0274291"/>
<dbReference type="HOGENOM" id="CLU_115295_0_0_1"/>
<dbReference type="InParanoid" id="Q86AA1"/>
<dbReference type="PRO" id="PR:Q86AA1"/>
<dbReference type="Proteomes" id="UP000002195">
    <property type="component" value="Chromosome 2"/>
</dbReference>
<dbReference type="GO" id="GO:0003796">
    <property type="term" value="F:lysozyme activity"/>
    <property type="evidence" value="ECO:0007669"/>
    <property type="project" value="UniProtKB-EC"/>
</dbReference>
<dbReference type="GO" id="GO:0016998">
    <property type="term" value="P:cell wall macromolecule catabolic process"/>
    <property type="evidence" value="ECO:0007669"/>
    <property type="project" value="InterPro"/>
</dbReference>
<dbReference type="GO" id="GO:0042742">
    <property type="term" value="P:defense response to bacterium"/>
    <property type="evidence" value="ECO:0007669"/>
    <property type="project" value="UniProtKB-KW"/>
</dbReference>
<dbReference type="GO" id="GO:0031640">
    <property type="term" value="P:killing of cells of another organism"/>
    <property type="evidence" value="ECO:0007669"/>
    <property type="project" value="UniProtKB-KW"/>
</dbReference>
<dbReference type="GO" id="GO:0009253">
    <property type="term" value="P:peptidoglycan catabolic process"/>
    <property type="evidence" value="ECO:0007669"/>
    <property type="project" value="InterPro"/>
</dbReference>
<dbReference type="Gene3D" id="1.10.530.40">
    <property type="match status" value="1"/>
</dbReference>
<dbReference type="InterPro" id="IPR002196">
    <property type="entry name" value="Glyco_hydro_24"/>
</dbReference>
<dbReference type="InterPro" id="IPR023346">
    <property type="entry name" value="Lysozyme-like_dom_sf"/>
</dbReference>
<dbReference type="InterPro" id="IPR023347">
    <property type="entry name" value="Lysozyme_dom_sf"/>
</dbReference>
<dbReference type="InterPro" id="IPR052619">
    <property type="entry name" value="Phage_lysozyme-like"/>
</dbReference>
<dbReference type="InterPro" id="IPR001165">
    <property type="entry name" value="T4-type_lysozyme"/>
</dbReference>
<dbReference type="PANTHER" id="PTHR37406">
    <property type="entry name" value="T4-TYPE LYSOZYME 1-RELATED"/>
    <property type="match status" value="1"/>
</dbReference>
<dbReference type="PANTHER" id="PTHR37406:SF1">
    <property type="entry name" value="T4-TYPE LYSOZYME 1-RELATED"/>
    <property type="match status" value="1"/>
</dbReference>
<dbReference type="Pfam" id="PF00959">
    <property type="entry name" value="Phage_lysozyme"/>
    <property type="match status" value="1"/>
</dbReference>
<dbReference type="PRINTS" id="PR00684">
    <property type="entry name" value="T4LYSOZYME"/>
</dbReference>
<dbReference type="SUPFAM" id="SSF53955">
    <property type="entry name" value="Lysozyme-like"/>
    <property type="match status" value="1"/>
</dbReference>
<organism>
    <name type="scientific">Dictyostelium discoideum</name>
    <name type="common">Social amoeba</name>
    <dbReference type="NCBI Taxonomy" id="44689"/>
    <lineage>
        <taxon>Eukaryota</taxon>
        <taxon>Amoebozoa</taxon>
        <taxon>Evosea</taxon>
        <taxon>Eumycetozoa</taxon>
        <taxon>Dictyostelia</taxon>
        <taxon>Dictyosteliales</taxon>
        <taxon>Dictyosteliaceae</taxon>
        <taxon>Dictyostelium</taxon>
    </lineage>
</organism>
<gene>
    <name type="ORF">DDB_G0274291</name>
</gene>
<comment type="catalytic activity">
    <reaction>
        <text>Hydrolysis of (1-&gt;4)-beta-linkages between N-acetylmuramic acid and N-acetyl-D-glucosamine residues in a peptidoglycan and between N-acetyl-D-glucosamine residues in chitodextrins.</text>
        <dbReference type="EC" id="3.2.1.17"/>
    </reaction>
</comment>
<comment type="similarity">
    <text evidence="2">Belongs to the glycosyl hydrolase 24 family.</text>
</comment>
<name>LYST2_DICDI</name>
<evidence type="ECO:0000250" key="1"/>
<evidence type="ECO:0000305" key="2"/>
<sequence length="170" mass="19221">MVSSLKDMLKYDEGEKLEMYKDTEGNYTIGIGHLITKNKDKNEAIKILEGEIGHTVKLNSKKEPEISSSESESLFEKDKSVAINSIENSSTLSTIYNNLDSNRKMALANMVFQMGASNVSKFKKSLKLIEEKKWAEAAIELKNSTWNTQTPKRSNRVISVFETGTLKEYK</sequence>
<feature type="chain" id="PRO_0000328720" description="Probable T4-type lysozyme 2">
    <location>
        <begin position="1"/>
        <end position="170"/>
    </location>
</feature>
<feature type="active site" description="Proton donor" evidence="1">
    <location>
        <position position="13"/>
    </location>
</feature>
<feature type="active site" description="Nucleophile" evidence="1">
    <location>
        <position position="22"/>
    </location>
</feature>
<keyword id="KW-0929">Antimicrobial</keyword>
<keyword id="KW-0081">Bacteriolytic enzyme</keyword>
<keyword id="KW-0326">Glycosidase</keyword>
<keyword id="KW-0378">Hydrolase</keyword>
<keyword id="KW-1185">Reference proteome</keyword>
<accession>Q86AA1</accession>
<accession>Q556F1</accession>
<proteinExistence type="evidence at transcript level"/>
<reference key="1">
    <citation type="journal article" date="2002" name="Nature">
        <title>Sequence and analysis of chromosome 2 of Dictyostelium discoideum.</title>
        <authorList>
            <person name="Gloeckner G."/>
            <person name="Eichinger L."/>
            <person name="Szafranski K."/>
            <person name="Pachebat J.A."/>
            <person name="Bankier A.T."/>
            <person name="Dear P.H."/>
            <person name="Lehmann R."/>
            <person name="Baumgart C."/>
            <person name="Parra G."/>
            <person name="Abril J.F."/>
            <person name="Guigo R."/>
            <person name="Kumpf K."/>
            <person name="Tunggal B."/>
            <person name="Cox E.C."/>
            <person name="Quail M.A."/>
            <person name="Platzer M."/>
            <person name="Rosenthal A."/>
            <person name="Noegel A.A."/>
        </authorList>
    </citation>
    <scope>NUCLEOTIDE SEQUENCE [LARGE SCALE GENOMIC DNA]</scope>
    <source>
        <strain>AX4</strain>
    </source>
</reference>
<reference key="2">
    <citation type="journal article" date="2005" name="Nature">
        <title>The genome of the social amoeba Dictyostelium discoideum.</title>
        <authorList>
            <person name="Eichinger L."/>
            <person name="Pachebat J.A."/>
            <person name="Gloeckner G."/>
            <person name="Rajandream M.A."/>
            <person name="Sucgang R."/>
            <person name="Berriman M."/>
            <person name="Song J."/>
            <person name="Olsen R."/>
            <person name="Szafranski K."/>
            <person name="Xu Q."/>
            <person name="Tunggal B."/>
            <person name="Kummerfeld S."/>
            <person name="Madera M."/>
            <person name="Konfortov B.A."/>
            <person name="Rivero F."/>
            <person name="Bankier A.T."/>
            <person name="Lehmann R."/>
            <person name="Hamlin N."/>
            <person name="Davies R."/>
            <person name="Gaudet P."/>
            <person name="Fey P."/>
            <person name="Pilcher K."/>
            <person name="Chen G."/>
            <person name="Saunders D."/>
            <person name="Sodergren E.J."/>
            <person name="Davis P."/>
            <person name="Kerhornou A."/>
            <person name="Nie X."/>
            <person name="Hall N."/>
            <person name="Anjard C."/>
            <person name="Hemphill L."/>
            <person name="Bason N."/>
            <person name="Farbrother P."/>
            <person name="Desany B."/>
            <person name="Just E."/>
            <person name="Morio T."/>
            <person name="Rost R."/>
            <person name="Churcher C.M."/>
            <person name="Cooper J."/>
            <person name="Haydock S."/>
            <person name="van Driessche N."/>
            <person name="Cronin A."/>
            <person name="Goodhead I."/>
            <person name="Muzny D.M."/>
            <person name="Mourier T."/>
            <person name="Pain A."/>
            <person name="Lu M."/>
            <person name="Harper D."/>
            <person name="Lindsay R."/>
            <person name="Hauser H."/>
            <person name="James K.D."/>
            <person name="Quiles M."/>
            <person name="Madan Babu M."/>
            <person name="Saito T."/>
            <person name="Buchrieser C."/>
            <person name="Wardroper A."/>
            <person name="Felder M."/>
            <person name="Thangavelu M."/>
            <person name="Johnson D."/>
            <person name="Knights A."/>
            <person name="Loulseged H."/>
            <person name="Mungall K.L."/>
            <person name="Oliver K."/>
            <person name="Price C."/>
            <person name="Quail M.A."/>
            <person name="Urushihara H."/>
            <person name="Hernandez J."/>
            <person name="Rabbinowitsch E."/>
            <person name="Steffen D."/>
            <person name="Sanders M."/>
            <person name="Ma J."/>
            <person name="Kohara Y."/>
            <person name="Sharp S."/>
            <person name="Simmonds M.N."/>
            <person name="Spiegler S."/>
            <person name="Tivey A."/>
            <person name="Sugano S."/>
            <person name="White B."/>
            <person name="Walker D."/>
            <person name="Woodward J.R."/>
            <person name="Winckler T."/>
            <person name="Tanaka Y."/>
            <person name="Shaulsky G."/>
            <person name="Schleicher M."/>
            <person name="Weinstock G.M."/>
            <person name="Rosenthal A."/>
            <person name="Cox E.C."/>
            <person name="Chisholm R.L."/>
            <person name="Gibbs R.A."/>
            <person name="Loomis W.F."/>
            <person name="Platzer M."/>
            <person name="Kay R.R."/>
            <person name="Williams J.G."/>
            <person name="Dear P.H."/>
            <person name="Noegel A.A."/>
            <person name="Barrell B.G."/>
            <person name="Kuspa A."/>
        </authorList>
    </citation>
    <scope>NUCLEOTIDE SEQUENCE [LARGE SCALE GENOMIC DNA]</scope>
    <source>
        <strain>AX4</strain>
    </source>
</reference>
<reference key="3">
    <citation type="journal article" date="2004" name="Nucleic Acids Res.">
        <title>Analyses of cDNAs from growth and slug stages of Dictyostelium discoideum.</title>
        <authorList>
            <person name="Urushihara H."/>
            <person name="Morio T."/>
            <person name="Saito T."/>
            <person name="Kohara Y."/>
            <person name="Koriki E."/>
            <person name="Ochiai H."/>
            <person name="Maeda M."/>
            <person name="Williams J.G."/>
            <person name="Takeuchi I."/>
            <person name="Tanaka Y."/>
        </authorList>
    </citation>
    <scope>NUCLEOTIDE SEQUENCE [LARGE SCALE MRNA]</scope>
    <source>
        <strain>AX4</strain>
    </source>
</reference>